<gene>
    <name type="primary">SHO1</name>
    <name type="ORF">SCHCODRAFT_13733</name>
</gene>
<feature type="chain" id="PRO_0000410397" description="High osmolarity signaling protein SHO1">
    <location>
        <begin position="1"/>
        <end position="331"/>
    </location>
</feature>
<feature type="topological domain" description="Cytoplasmic" evidence="2">
    <location>
        <begin position="1"/>
        <end position="19"/>
    </location>
</feature>
<feature type="transmembrane region" description="Helical" evidence="2">
    <location>
        <begin position="20"/>
        <end position="40"/>
    </location>
</feature>
<feature type="topological domain" description="Extracellular" evidence="2">
    <location>
        <begin position="41"/>
        <end position="46"/>
    </location>
</feature>
<feature type="transmembrane region" description="Helical" evidence="2">
    <location>
        <begin position="47"/>
        <end position="67"/>
    </location>
</feature>
<feature type="topological domain" description="Cytoplasmic" evidence="2">
    <location>
        <begin position="68"/>
        <end position="81"/>
    </location>
</feature>
<feature type="transmembrane region" description="Helical" evidence="2">
    <location>
        <begin position="82"/>
        <end position="102"/>
    </location>
</feature>
<feature type="topological domain" description="Extracellular" evidence="2">
    <location>
        <begin position="103"/>
        <end position="109"/>
    </location>
</feature>
<feature type="transmembrane region" description="Helical" evidence="2">
    <location>
        <begin position="110"/>
        <end position="130"/>
    </location>
</feature>
<feature type="topological domain" description="Cytoplasmic" evidence="2">
    <location>
        <begin position="131"/>
        <end position="331"/>
    </location>
</feature>
<feature type="domain" description="SH3" evidence="3">
    <location>
        <begin position="272"/>
        <end position="331"/>
    </location>
</feature>
<feature type="region of interest" description="Disordered" evidence="4">
    <location>
        <begin position="218"/>
        <end position="269"/>
    </location>
</feature>
<feature type="compositionally biased region" description="Gly residues" evidence="4">
    <location>
        <begin position="218"/>
        <end position="229"/>
    </location>
</feature>
<feature type="compositionally biased region" description="Polar residues" evidence="4">
    <location>
        <begin position="231"/>
        <end position="245"/>
    </location>
</feature>
<reference key="1">
    <citation type="journal article" date="2010" name="Nat. Biotechnol.">
        <title>Genome sequence of the model mushroom Schizophyllum commune.</title>
        <authorList>
            <person name="Ohm R.A."/>
            <person name="de Jong J.F."/>
            <person name="Lugones L.G."/>
            <person name="Aerts A."/>
            <person name="Kothe E."/>
            <person name="Stajich J.E."/>
            <person name="de Vries R.P."/>
            <person name="Record E."/>
            <person name="Levasseur A."/>
            <person name="Baker S.E."/>
            <person name="Bartholomew K.A."/>
            <person name="Coutinho P.M."/>
            <person name="Erdmann S."/>
            <person name="Fowler T.J."/>
            <person name="Gathman A.C."/>
            <person name="Lombard V."/>
            <person name="Henrissat B."/>
            <person name="Knabe N."/>
            <person name="Kuees U."/>
            <person name="Lilly W.W."/>
            <person name="Lindquist E."/>
            <person name="Lucas S."/>
            <person name="Magnuson J.K."/>
            <person name="Piumi F."/>
            <person name="Raudaskoski M."/>
            <person name="Salamov A."/>
            <person name="Schmutz J."/>
            <person name="Schwarze F.W.M.R."/>
            <person name="vanKuyk P.A."/>
            <person name="Horton J.S."/>
            <person name="Grigoriev I.V."/>
            <person name="Woesten H.A.B."/>
        </authorList>
    </citation>
    <scope>NUCLEOTIDE SEQUENCE [LARGE SCALE GENOMIC DNA]</scope>
    <source>
        <strain>H4-8 / FGSC 9210</strain>
    </source>
</reference>
<name>SHO1_SCHCM</name>
<keyword id="KW-1003">Cell membrane</keyword>
<keyword id="KW-0472">Membrane</keyword>
<keyword id="KW-1185">Reference proteome</keyword>
<keyword id="KW-0728">SH3 domain</keyword>
<keyword id="KW-0346">Stress response</keyword>
<keyword id="KW-0812">Transmembrane</keyword>
<keyword id="KW-1133">Transmembrane helix</keyword>
<organism>
    <name type="scientific">Schizophyllum commune (strain H4-8 / FGSC 9210)</name>
    <name type="common">Split gill fungus</name>
    <dbReference type="NCBI Taxonomy" id="578458"/>
    <lineage>
        <taxon>Eukaryota</taxon>
        <taxon>Fungi</taxon>
        <taxon>Dikarya</taxon>
        <taxon>Basidiomycota</taxon>
        <taxon>Agaricomycotina</taxon>
        <taxon>Agaricomycetes</taxon>
        <taxon>Agaricomycetidae</taxon>
        <taxon>Agaricales</taxon>
        <taxon>Schizophyllaceae</taxon>
        <taxon>Schizophyllum</taxon>
    </lineage>
</organism>
<sequence length="331" mass="34443">MPPRGNEGLDFTPIITHYLFLFTSILAFIAWFTAFIGQIIATARWNGPVGTLWFAIFLHLFLILGVLYTLASDSLATHRFQISVFGAVALVFAVNGANAGLYAEDGALNAMAAGYLILAIVDILWLLFFTAEEESLLFHLFNRLGTGGLTPPSRRRRARSVHNMAPANGYASGGYGAGGGISSHDVATGAYDAKPVSGAFDARSGTASGAFDNKSAGAGAGLNSPGGGARSQHSLGGPTTATGSVHSPRGEDGTGSPLMAQGDMSGAGTSGEFLPKAKALYAYTASPDDPNEISFAKGEILEVTDKSGKWWSARKADGTNGIAPSNYLQLL</sequence>
<evidence type="ECO:0000250" key="1"/>
<evidence type="ECO:0000255" key="2"/>
<evidence type="ECO:0000255" key="3">
    <source>
        <dbReference type="PROSITE-ProRule" id="PRU00192"/>
    </source>
</evidence>
<evidence type="ECO:0000256" key="4">
    <source>
        <dbReference type="SAM" id="MobiDB-lite"/>
    </source>
</evidence>
<evidence type="ECO:0000305" key="5"/>
<accession>D8PSG0</accession>
<comment type="function">
    <text evidence="1">Plasma membrane osmosensor that activates the high osmolarity glycerol (HOG) MAPK signaling pathway in response to high osmolarity.</text>
</comment>
<comment type="subunit">
    <text evidence="1">Forms homooligomers.</text>
</comment>
<comment type="subcellular location">
    <subcellularLocation>
        <location evidence="1">Cell membrane</location>
        <topology evidence="1">Multi-pass membrane protein</topology>
    </subcellularLocation>
</comment>
<comment type="similarity">
    <text evidence="5">Belongs to the SHO1 family.</text>
</comment>
<dbReference type="EMBL" id="GL377302">
    <property type="protein sequence ID" value="EFJ03941.1"/>
    <property type="molecule type" value="Genomic_DNA"/>
</dbReference>
<dbReference type="RefSeq" id="XP_003038843.1">
    <property type="nucleotide sequence ID" value="XM_003038797.1"/>
</dbReference>
<dbReference type="SMR" id="D8PSG0"/>
<dbReference type="STRING" id="578458.D8PSG0"/>
<dbReference type="GeneID" id="9585135"/>
<dbReference type="KEGG" id="scm:SCHCO_013733"/>
<dbReference type="VEuPathDB" id="FungiDB:SCHCODRAFT_013733"/>
<dbReference type="eggNOG" id="ENOG502QW7A">
    <property type="taxonomic scope" value="Eukaryota"/>
</dbReference>
<dbReference type="HOGENOM" id="CLU_043316_0_0_1"/>
<dbReference type="InParanoid" id="D8PSG0"/>
<dbReference type="OMA" id="KNGKWWQ"/>
<dbReference type="OrthoDB" id="5983572at2759"/>
<dbReference type="Proteomes" id="UP000007431">
    <property type="component" value="Unassembled WGS sequence"/>
</dbReference>
<dbReference type="GO" id="GO:0005886">
    <property type="term" value="C:plasma membrane"/>
    <property type="evidence" value="ECO:0007669"/>
    <property type="project" value="UniProtKB-SubCell"/>
</dbReference>
<dbReference type="CDD" id="cd11855">
    <property type="entry name" value="SH3_Sho1p"/>
    <property type="match status" value="1"/>
</dbReference>
<dbReference type="FunFam" id="2.30.30.40:FF:000213">
    <property type="entry name" value="High osmolarity signaling protein SHO1"/>
    <property type="match status" value="1"/>
</dbReference>
<dbReference type="Gene3D" id="2.30.30.40">
    <property type="entry name" value="SH3 Domains"/>
    <property type="match status" value="1"/>
</dbReference>
<dbReference type="InterPro" id="IPR036028">
    <property type="entry name" value="SH3-like_dom_sf"/>
</dbReference>
<dbReference type="InterPro" id="IPR001452">
    <property type="entry name" value="SH3_domain"/>
</dbReference>
<dbReference type="InterPro" id="IPR035522">
    <property type="entry name" value="Sho1_SH3"/>
</dbReference>
<dbReference type="Pfam" id="PF00018">
    <property type="entry name" value="SH3_1"/>
    <property type="match status" value="1"/>
</dbReference>
<dbReference type="PRINTS" id="PR00452">
    <property type="entry name" value="SH3DOMAIN"/>
</dbReference>
<dbReference type="SMART" id="SM00326">
    <property type="entry name" value="SH3"/>
    <property type="match status" value="1"/>
</dbReference>
<dbReference type="SUPFAM" id="SSF50044">
    <property type="entry name" value="SH3-domain"/>
    <property type="match status" value="1"/>
</dbReference>
<dbReference type="PROSITE" id="PS50002">
    <property type="entry name" value="SH3"/>
    <property type="match status" value="1"/>
</dbReference>
<proteinExistence type="inferred from homology"/>
<protein>
    <recommendedName>
        <fullName>High osmolarity signaling protein SHO1</fullName>
    </recommendedName>
    <alternativeName>
        <fullName>Osmosensor SHO1</fullName>
    </alternativeName>
</protein>